<organism>
    <name type="scientific">Escherichia coli</name>
    <dbReference type="NCBI Taxonomy" id="562"/>
    <lineage>
        <taxon>Bacteria</taxon>
        <taxon>Pseudomonadati</taxon>
        <taxon>Pseudomonadota</taxon>
        <taxon>Gammaproteobacteria</taxon>
        <taxon>Enterobacterales</taxon>
        <taxon>Enterobacteriaceae</taxon>
        <taxon>Escherichia</taxon>
    </lineage>
</organism>
<feature type="signal peptide" evidence="1 2">
    <location>
        <begin position="1"/>
        <end position="22"/>
    </location>
</feature>
<feature type="chain" id="PRO_0000009181" description="CS3 fimbrial subunit A">
    <location>
        <begin position="23"/>
        <end position="168"/>
    </location>
</feature>
<feature type="sequence conflict" description="In Ref. 2; AAA23614." evidence="3" ref="2">
    <original>N</original>
    <variation>S</variation>
    <location>
        <position position="83"/>
    </location>
</feature>
<sequence length="168" mass="17492">MLKIKYLLIGLSLSAMSSYSLAAAGPTLTKELALNVLSPAALDATWAPQDNLTLSNTGVSNTLVGVLTLSNTSIDTVSIASTNVSDTSKNGTVTFAHETNNSASFATTISTDNANITLDKNAGNTIVKTTNGSQLPTNLPLKFITTEGNEHLVSGNYRANITITSTIK</sequence>
<evidence type="ECO:0000269" key="1">
    <source>
    </source>
</evidence>
<evidence type="ECO:0000269" key="2">
    <source>
    </source>
</evidence>
<evidence type="ECO:0000305" key="3"/>
<protein>
    <recommendedName>
        <fullName>CS3 fimbrial subunit A</fullName>
    </recommendedName>
    <alternativeName>
        <fullName>CS3 pilin</fullName>
    </alternativeName>
</protein>
<name>FMS3_ECOLX</name>
<proteinExistence type="evidence at protein level"/>
<reference key="1">
    <citation type="journal article" date="1989" name="Mol. Microbiol.">
        <title>Genes for biosynthesis and assembly of CS3 pili of CFA/II enterotoxigenic Escherichia coli: novel regulation of pilus production by bypassing an amber codon.</title>
        <authorList>
            <person name="Jalajakumari M.B."/>
            <person name="Thomas C.J."/>
            <person name="Halter R."/>
            <person name="Manning P.A."/>
        </authorList>
    </citation>
    <scope>NUCLEOTIDE SEQUENCE [GENOMIC DNA]</scope>
    <scope>PARTIAL PROTEIN SEQUENCE</scope>
    <source>
        <strain>PB176 / ETEC</strain>
    </source>
</reference>
<reference key="2">
    <citation type="journal article" date="1988" name="Infect. Immun.">
        <title>Nucleotide sequence of the gene encoding the major subunit of CS3 fimbriae of enterotoxigenic Escherichia coli.</title>
        <authorList>
            <person name="Boylan M."/>
            <person name="Smyth C.J."/>
            <person name="Scott J.R."/>
        </authorList>
    </citation>
    <scope>NUCLEOTIDE SEQUENCE [GENOMIC DNA]</scope>
    <source>
        <strain>ETEC</strain>
    </source>
</reference>
<reference key="3">
    <citation type="journal article" date="1989" name="J. Bacteriol.">
        <title>Purification and analysis of colonization factor antigen I, coli surface antigen 1, and coli surface antigen 3 fimbriae from enterotoxigenic Escherichia coli.</title>
        <authorList>
            <person name="Hall R.H."/>
            <person name="Maneval D.R. Jr."/>
            <person name="Collins J.H."/>
            <person name="Theibert J.L."/>
            <person name="Levine M.M."/>
        </authorList>
    </citation>
    <scope>PROTEIN SEQUENCE OF 23-45</scope>
    <source>
        <strain>E9034A</strain>
    </source>
</reference>
<dbReference type="EMBL" id="X16944">
    <property type="protein sequence ID" value="CAA34820.1"/>
    <property type="molecule type" value="Genomic_DNA"/>
</dbReference>
<dbReference type="EMBL" id="M35657">
    <property type="protein sequence ID" value="AAA23614.1"/>
    <property type="molecule type" value="Genomic_DNA"/>
</dbReference>
<dbReference type="PIR" id="A34952">
    <property type="entry name" value="A34952"/>
</dbReference>
<dbReference type="RefSeq" id="WP_013188494.1">
    <property type="nucleotide sequence ID" value="NZ_NNTT01000085.1"/>
</dbReference>
<dbReference type="GO" id="GO:0009289">
    <property type="term" value="C:pilus"/>
    <property type="evidence" value="ECO:0007669"/>
    <property type="project" value="UniProtKB-SubCell"/>
</dbReference>
<comment type="function">
    <text>Fimbriae (also called pili), polar filaments radiating from the surface of the bacterium to a length of 0.5-1.5 micrometers and numbering 100-300 per cell, enable bacteria to colonize the epithelium of specific host organs.</text>
</comment>
<comment type="subcellular location">
    <subcellularLocation>
        <location>Fimbrium</location>
    </subcellularLocation>
</comment>
<comment type="PTM">
    <text>A longer minor form, starting at amino acid 15, has been detected by amino acid sequencing. This is probably due to alternative processing of the signal peptide.</text>
</comment>
<keyword id="KW-0903">Direct protein sequencing</keyword>
<keyword id="KW-0281">Fimbrium</keyword>
<keyword id="KW-0732">Signal</keyword>
<accession>P15488</accession>